<reference key="1">
    <citation type="journal article" date="1993" name="Mol. Plant Microbe Interact.">
        <title>Characterization of the Pseudomonas syringae pv. syringae 61 hrpJ and hrpI genes: homology of HrpI to a superfamily of proteins associated with protein translocation.</title>
        <authorList>
            <person name="Huang H.-C."/>
            <person name="Xiao Y."/>
            <person name="Lin R.-H."/>
            <person name="Lu Y."/>
            <person name="Hutcheson S.W."/>
            <person name="Collmer A."/>
        </authorList>
    </citation>
    <scope>NUCLEOTIDE SEQUENCE [GENOMIC DNA]</scope>
    <source>
        <strain>Pss61</strain>
    </source>
</reference>
<evidence type="ECO:0000305" key="1"/>
<dbReference type="EMBL" id="L11281">
    <property type="protein sequence ID" value="AAA02998.1"/>
    <property type="molecule type" value="Unassigned_DNA"/>
</dbReference>
<dbReference type="SMR" id="Q05395"/>
<dbReference type="GO" id="GO:0009986">
    <property type="term" value="C:cell surface"/>
    <property type="evidence" value="ECO:0007669"/>
    <property type="project" value="InterPro"/>
</dbReference>
<dbReference type="GO" id="GO:0019867">
    <property type="term" value="C:outer membrane"/>
    <property type="evidence" value="ECO:0007669"/>
    <property type="project" value="InterPro"/>
</dbReference>
<dbReference type="GO" id="GO:0050709">
    <property type="term" value="P:negative regulation of protein secretion"/>
    <property type="evidence" value="ECO:0007669"/>
    <property type="project" value="InterPro"/>
</dbReference>
<dbReference type="GO" id="GO:0030254">
    <property type="term" value="P:protein secretion by the type III secretion system"/>
    <property type="evidence" value="ECO:0007669"/>
    <property type="project" value="InterPro"/>
</dbReference>
<dbReference type="GO" id="GO:0052040">
    <property type="term" value="P:symbiont-mediated perturbation of host programmed cell death"/>
    <property type="evidence" value="ECO:0007669"/>
    <property type="project" value="UniProtKB-KW"/>
</dbReference>
<dbReference type="InterPro" id="IPR010812">
    <property type="entry name" value="HrpJ-like"/>
</dbReference>
<dbReference type="InterPro" id="IPR013401">
    <property type="entry name" value="T3SS_LcrE"/>
</dbReference>
<dbReference type="InterPro" id="IPR013351">
    <property type="entry name" value="T3SS_TyeA-rel"/>
</dbReference>
<dbReference type="NCBIfam" id="TIGR02568">
    <property type="entry name" value="LcrE"/>
    <property type="match status" value="1"/>
</dbReference>
<dbReference type="NCBIfam" id="TIGR02511">
    <property type="entry name" value="type_III_tyeA"/>
    <property type="match status" value="1"/>
</dbReference>
<dbReference type="Pfam" id="PF07201">
    <property type="entry name" value="HrpJ"/>
    <property type="match status" value="1"/>
</dbReference>
<dbReference type="SUPFAM" id="SSF140591">
    <property type="entry name" value="Type III secretion system domain"/>
    <property type="match status" value="1"/>
</dbReference>
<keyword id="KW-0928">Hypersensitive response elicitation</keyword>
<keyword id="KW-0653">Protein transport</keyword>
<keyword id="KW-0813">Transport</keyword>
<proteinExistence type="inferred from homology"/>
<gene>
    <name type="primary">hrpJ</name>
</gene>
<accession>Q05395</accession>
<comment type="function">
    <text>Involved in the secretion of a proteinaceous elicitor of the hypersensitivity response in plants. Also required for pathogenicity on host plant.</text>
</comment>
<comment type="similarity">
    <text evidence="1">Belongs to the HrpJ/YopN family.</text>
</comment>
<protein>
    <recommendedName>
        <fullName>Hypersensitivity response secretion protein HrpJ</fullName>
    </recommendedName>
</protein>
<sequence length="346" mass="37711">MKIVAPPTLPIRPVAPIRAITPAARAIPGSGLPDEKGTSSLQVSRFAAALVQHSRILRERELIASRNALQSRAVKLGELYQLLMSTSDTGLDNAARLLRKKLLQDNDADLEQVLEFADGDAAKAHVVLQAARKQAEDDGAEEEYAALTQTLKHLRRRFGPRARAGINTARAFGRQNIDNKRRTALRNLYGVAVSGQPNVTGLIEALIGEQQEPGEFDLNLRDMRRAIADDLSAITPSASHEQLRTLMHGLTTARHVTTLLRGCEHLLGRMRKKNPKLTVDPPAFLKHMLTLTANGMNVNQTLQLTQHIGGNKLEHQLAFLNGLRADADATADPALAGPEKPPGRAE</sequence>
<organism>
    <name type="scientific">Pseudomonas syringae pv. syringae</name>
    <dbReference type="NCBI Taxonomy" id="321"/>
    <lineage>
        <taxon>Bacteria</taxon>
        <taxon>Pseudomonadati</taxon>
        <taxon>Pseudomonadota</taxon>
        <taxon>Gammaproteobacteria</taxon>
        <taxon>Pseudomonadales</taxon>
        <taxon>Pseudomonadaceae</taxon>
        <taxon>Pseudomonas</taxon>
        <taxon>Pseudomonas syringae</taxon>
    </lineage>
</organism>
<name>HRPJ_PSESY</name>
<feature type="chain" id="PRO_0000084065" description="Hypersensitivity response secretion protein HrpJ">
    <location>
        <begin position="1"/>
        <end position="346"/>
    </location>
</feature>